<keyword id="KW-0066">ATP synthesis</keyword>
<keyword id="KW-0139">CF(1)</keyword>
<keyword id="KW-0150">Chloroplast</keyword>
<keyword id="KW-0375">Hydrogen ion transport</keyword>
<keyword id="KW-0406">Ion transport</keyword>
<keyword id="KW-0472">Membrane</keyword>
<keyword id="KW-0934">Plastid</keyword>
<keyword id="KW-1185">Reference proteome</keyword>
<keyword id="KW-0793">Thylakoid</keyword>
<keyword id="KW-0813">Transport</keyword>
<name>ATPE_OSTTA</name>
<feature type="chain" id="PRO_0000275210" description="ATP synthase epsilon chain, chloroplastic">
    <location>
        <begin position="1"/>
        <end position="142"/>
    </location>
</feature>
<dbReference type="EMBL" id="CR954199">
    <property type="protein sequence ID" value="CAL36334.1"/>
    <property type="molecule type" value="Genomic_DNA"/>
</dbReference>
<dbReference type="RefSeq" id="YP_717212.1">
    <property type="nucleotide sequence ID" value="NC_008289.1"/>
</dbReference>
<dbReference type="SMR" id="Q0P3P3"/>
<dbReference type="FunCoup" id="Q0P3P3">
    <property type="interactions" value="215"/>
</dbReference>
<dbReference type="STRING" id="70448.Q0P3P3"/>
<dbReference type="GeneID" id="4238809"/>
<dbReference type="KEGG" id="ota:OstapCp09"/>
<dbReference type="eggNOG" id="KOG1758">
    <property type="taxonomic scope" value="Eukaryota"/>
</dbReference>
<dbReference type="InParanoid" id="Q0P3P3"/>
<dbReference type="Proteomes" id="UP000009170">
    <property type="component" value="Chloroplast"/>
</dbReference>
<dbReference type="GO" id="GO:0009535">
    <property type="term" value="C:chloroplast thylakoid membrane"/>
    <property type="evidence" value="ECO:0007669"/>
    <property type="project" value="UniProtKB-SubCell"/>
</dbReference>
<dbReference type="GO" id="GO:0045259">
    <property type="term" value="C:proton-transporting ATP synthase complex"/>
    <property type="evidence" value="ECO:0007669"/>
    <property type="project" value="UniProtKB-KW"/>
</dbReference>
<dbReference type="GO" id="GO:0005524">
    <property type="term" value="F:ATP binding"/>
    <property type="evidence" value="ECO:0007669"/>
    <property type="project" value="UniProtKB-UniRule"/>
</dbReference>
<dbReference type="GO" id="GO:0046933">
    <property type="term" value="F:proton-transporting ATP synthase activity, rotational mechanism"/>
    <property type="evidence" value="ECO:0007669"/>
    <property type="project" value="UniProtKB-UniRule"/>
</dbReference>
<dbReference type="CDD" id="cd12152">
    <property type="entry name" value="F1-ATPase_delta"/>
    <property type="match status" value="1"/>
</dbReference>
<dbReference type="Gene3D" id="2.60.15.10">
    <property type="entry name" value="F0F1 ATP synthase delta/epsilon subunit, N-terminal"/>
    <property type="match status" value="1"/>
</dbReference>
<dbReference type="HAMAP" id="MF_00530">
    <property type="entry name" value="ATP_synth_epsil_bac"/>
    <property type="match status" value="1"/>
</dbReference>
<dbReference type="InterPro" id="IPR001469">
    <property type="entry name" value="ATP_synth_F1_dsu/esu"/>
</dbReference>
<dbReference type="InterPro" id="IPR020546">
    <property type="entry name" value="ATP_synth_F1_dsu/esu_N"/>
</dbReference>
<dbReference type="InterPro" id="IPR036771">
    <property type="entry name" value="ATPsynth_dsu/esu_N"/>
</dbReference>
<dbReference type="NCBIfam" id="TIGR01216">
    <property type="entry name" value="ATP_synt_epsi"/>
    <property type="match status" value="1"/>
</dbReference>
<dbReference type="PANTHER" id="PTHR13822">
    <property type="entry name" value="ATP SYNTHASE DELTA/EPSILON CHAIN"/>
    <property type="match status" value="1"/>
</dbReference>
<dbReference type="PANTHER" id="PTHR13822:SF10">
    <property type="entry name" value="ATP SYNTHASE EPSILON CHAIN, CHLOROPLASTIC"/>
    <property type="match status" value="1"/>
</dbReference>
<dbReference type="Pfam" id="PF02823">
    <property type="entry name" value="ATP-synt_DE_N"/>
    <property type="match status" value="1"/>
</dbReference>
<dbReference type="SUPFAM" id="SSF51344">
    <property type="entry name" value="Epsilon subunit of F1F0-ATP synthase N-terminal domain"/>
    <property type="match status" value="1"/>
</dbReference>
<evidence type="ECO:0000255" key="1">
    <source>
        <dbReference type="HAMAP-Rule" id="MF_00530"/>
    </source>
</evidence>
<organism>
    <name type="scientific">Ostreococcus tauri</name>
    <dbReference type="NCBI Taxonomy" id="70448"/>
    <lineage>
        <taxon>Eukaryota</taxon>
        <taxon>Viridiplantae</taxon>
        <taxon>Chlorophyta</taxon>
        <taxon>Mamiellophyceae</taxon>
        <taxon>Mamiellales</taxon>
        <taxon>Bathycoccaceae</taxon>
        <taxon>Ostreococcus</taxon>
    </lineage>
</organism>
<comment type="function">
    <text evidence="1">Produces ATP from ADP in the presence of a proton gradient across the membrane.</text>
</comment>
<comment type="subunit">
    <text evidence="1">F-type ATPases have 2 components, CF(1) - the catalytic core - and CF(0) - the membrane proton channel. CF(1) has five subunits: alpha(3), beta(3), gamma(1), delta(1), epsilon(1). CF(0) has three main subunits: a, b and c.</text>
</comment>
<comment type="subcellular location">
    <subcellularLocation>
        <location evidence="1">Plastid</location>
        <location evidence="1">Chloroplast thylakoid membrane</location>
        <topology evidence="1">Peripheral membrane protein</topology>
    </subcellularLocation>
</comment>
<comment type="similarity">
    <text evidence="1">Belongs to the ATPase epsilon chain family.</text>
</comment>
<protein>
    <recommendedName>
        <fullName evidence="1">ATP synthase epsilon chain, chloroplastic</fullName>
    </recommendedName>
    <alternativeName>
        <fullName evidence="1">ATP synthase F1 sector epsilon subunit</fullName>
    </alternativeName>
    <alternativeName>
        <fullName evidence="1">F-ATPase epsilon subunit</fullName>
    </alternativeName>
</protein>
<reference key="1">
    <citation type="journal article" date="2007" name="Mol. Biol. Evol.">
        <title>The complete chloroplast and mitochondrial DNA sequence of Ostreococcus tauri: organelle genomes of the smallest eukaryote are examples of compaction.</title>
        <authorList>
            <person name="Robbens S."/>
            <person name="Derelle E."/>
            <person name="Ferraz C."/>
            <person name="Wuyts J."/>
            <person name="Moreau H."/>
            <person name="Van de Peer Y."/>
        </authorList>
    </citation>
    <scope>NUCLEOTIDE SEQUENCE [LARGE SCALE GENOMIC DNA]</scope>
    <source>
        <strain>OTTH0595</strain>
    </source>
</reference>
<gene>
    <name evidence="1" type="primary">atpE</name>
    <name type="ordered locus">OtCpg00090</name>
</gene>
<accession>Q0P3P3</accession>
<proteinExistence type="inferred from homology"/>
<sequence>MEVCIVKPDRIFFKEEADELLLPTNTGYIGILKDHAPLVTGLDNGVLGVRQGTTWRFLALLGGFGVIKEGRVNILCRDIQDASEINLEEAEQLAATAKESMTKSDSKKGYIENQLKFDRETARVAAAKMYKESAGGSPVFGN</sequence>
<geneLocation type="chloroplast"/>